<evidence type="ECO:0000250" key="1">
    <source>
        <dbReference type="UniProtKB" id="P11064"/>
    </source>
</evidence>
<evidence type="ECO:0000250" key="2">
    <source>
        <dbReference type="UniProtKB" id="P24666"/>
    </source>
</evidence>
<evidence type="ECO:0000269" key="3">
    <source>
    </source>
</evidence>
<evidence type="ECO:0000303" key="4">
    <source>
    </source>
</evidence>
<evidence type="ECO:0000305" key="5"/>
<evidence type="ECO:0000312" key="6">
    <source>
        <dbReference type="RGD" id="2020"/>
    </source>
</evidence>
<keyword id="KW-0007">Acetylation</keyword>
<keyword id="KW-0025">Alternative splicing</keyword>
<keyword id="KW-0963">Cytoplasm</keyword>
<keyword id="KW-0903">Direct protein sequencing</keyword>
<keyword id="KW-0378">Hydrolase</keyword>
<keyword id="KW-0597">Phosphoprotein</keyword>
<keyword id="KW-0904">Protein phosphatase</keyword>
<keyword id="KW-1185">Reference proteome</keyword>
<gene>
    <name evidence="6" type="primary">Acp1</name>
</gene>
<dbReference type="EC" id="3.1.3.48" evidence="2"/>
<dbReference type="EC" id="3.1.3.2" evidence="2"/>
<dbReference type="EMBL" id="AF171072">
    <property type="protein sequence ID" value="AAD50990.1"/>
    <property type="molecule type" value="mRNA"/>
</dbReference>
<dbReference type="EMBL" id="BC062229">
    <property type="protein sequence ID" value="AAH62229.1"/>
    <property type="molecule type" value="mRNA"/>
</dbReference>
<dbReference type="PIR" id="A53874">
    <property type="entry name" value="A53874"/>
</dbReference>
<dbReference type="RefSeq" id="NP_067085.1">
    <molecule id="P41498-1"/>
    <property type="nucleotide sequence ID" value="NM_021262.3"/>
</dbReference>
<dbReference type="SMR" id="P41498"/>
<dbReference type="BioGRID" id="246352">
    <property type="interactions" value="2"/>
</dbReference>
<dbReference type="FunCoup" id="P41498">
    <property type="interactions" value="2003"/>
</dbReference>
<dbReference type="STRING" id="10116.ENSRNOP00000072548"/>
<dbReference type="BindingDB" id="P41498"/>
<dbReference type="ChEMBL" id="CHEMBL5169132"/>
<dbReference type="iPTMnet" id="P41498"/>
<dbReference type="PhosphoSitePlus" id="P41498"/>
<dbReference type="SwissPalm" id="P41498"/>
<dbReference type="jPOST" id="P41498"/>
<dbReference type="PaxDb" id="10116-ENSRNOP00000007287"/>
<dbReference type="DNASU" id="24161"/>
<dbReference type="Ensembl" id="ENSRNOT00000007287.8">
    <molecule id="P41498-1"/>
    <property type="protein sequence ID" value="ENSRNOP00000007287.8"/>
    <property type="gene ID" value="ENSRNOG00000005260.8"/>
</dbReference>
<dbReference type="GeneID" id="24161"/>
<dbReference type="KEGG" id="rno:24161"/>
<dbReference type="UCSC" id="RGD:2020">
    <molecule id="P41498-1"/>
    <property type="organism name" value="rat"/>
</dbReference>
<dbReference type="AGR" id="RGD:2020"/>
<dbReference type="CTD" id="52"/>
<dbReference type="RGD" id="2020">
    <property type="gene designation" value="Acp1"/>
</dbReference>
<dbReference type="eggNOG" id="KOG3217">
    <property type="taxonomic scope" value="Eukaryota"/>
</dbReference>
<dbReference type="InParanoid" id="P41498"/>
<dbReference type="OrthoDB" id="3388at2759"/>
<dbReference type="PhylomeDB" id="P41498"/>
<dbReference type="TreeFam" id="TF353727"/>
<dbReference type="PRO" id="PR:P41498"/>
<dbReference type="Proteomes" id="UP000002494">
    <property type="component" value="Chromosome 6"/>
</dbReference>
<dbReference type="GO" id="GO:0005737">
    <property type="term" value="C:cytoplasm"/>
    <property type="evidence" value="ECO:0000266"/>
    <property type="project" value="RGD"/>
</dbReference>
<dbReference type="GO" id="GO:0009898">
    <property type="term" value="C:cytoplasmic side of plasma membrane"/>
    <property type="evidence" value="ECO:0000266"/>
    <property type="project" value="RGD"/>
</dbReference>
<dbReference type="GO" id="GO:0005829">
    <property type="term" value="C:cytosol"/>
    <property type="evidence" value="ECO:0000266"/>
    <property type="project" value="RGD"/>
</dbReference>
<dbReference type="GO" id="GO:0042383">
    <property type="term" value="C:sarcolemma"/>
    <property type="evidence" value="ECO:0000266"/>
    <property type="project" value="RGD"/>
</dbReference>
<dbReference type="GO" id="GO:0045202">
    <property type="term" value="C:synapse"/>
    <property type="evidence" value="ECO:0007669"/>
    <property type="project" value="GOC"/>
</dbReference>
<dbReference type="GO" id="GO:0003993">
    <property type="term" value="F:acid phosphatase activity"/>
    <property type="evidence" value="ECO:0000314"/>
    <property type="project" value="RGD"/>
</dbReference>
<dbReference type="GO" id="GO:0004726">
    <property type="term" value="F:non-membrane spanning protein tyrosine phosphatase activity"/>
    <property type="evidence" value="ECO:0007669"/>
    <property type="project" value="InterPro"/>
</dbReference>
<dbReference type="GO" id="GO:0016791">
    <property type="term" value="F:phosphatase activity"/>
    <property type="evidence" value="ECO:0000266"/>
    <property type="project" value="RGD"/>
</dbReference>
<dbReference type="GO" id="GO:0004725">
    <property type="term" value="F:protein tyrosine phosphatase activity"/>
    <property type="evidence" value="ECO:0000314"/>
    <property type="project" value="RGD"/>
</dbReference>
<dbReference type="GO" id="GO:0017124">
    <property type="term" value="F:SH3 domain binding"/>
    <property type="evidence" value="ECO:0000314"/>
    <property type="project" value="RGD"/>
</dbReference>
<dbReference type="GO" id="GO:0007268">
    <property type="term" value="P:chemical synaptic transmission"/>
    <property type="evidence" value="ECO:0000270"/>
    <property type="project" value="RGD"/>
</dbReference>
<dbReference type="CDD" id="cd16343">
    <property type="entry name" value="LMWPTP"/>
    <property type="match status" value="1"/>
</dbReference>
<dbReference type="FunFam" id="3.40.50.2300:FF:000105">
    <property type="entry name" value="Low molecular weight phosphotyrosine protein"/>
    <property type="match status" value="1"/>
</dbReference>
<dbReference type="Gene3D" id="3.40.50.2300">
    <property type="match status" value="1"/>
</dbReference>
<dbReference type="InterPro" id="IPR050438">
    <property type="entry name" value="LMW_PTPase"/>
</dbReference>
<dbReference type="InterPro" id="IPR023485">
    <property type="entry name" value="Ptyr_pPase"/>
</dbReference>
<dbReference type="InterPro" id="IPR036196">
    <property type="entry name" value="Ptyr_pPase_sf"/>
</dbReference>
<dbReference type="InterPro" id="IPR002115">
    <property type="entry name" value="Tyr_Pase_low_mol_wt_mml"/>
</dbReference>
<dbReference type="InterPro" id="IPR017867">
    <property type="entry name" value="Tyr_phospatase_low_mol_wt"/>
</dbReference>
<dbReference type="PANTHER" id="PTHR11717:SF34">
    <property type="entry name" value="LOW MOLECULAR WEIGHT PHOSPHOTYROSINE PROTEIN PHOSPHATASE"/>
    <property type="match status" value="1"/>
</dbReference>
<dbReference type="PANTHER" id="PTHR11717">
    <property type="entry name" value="LOW MOLECULAR WEIGHT PROTEIN TYROSINE PHOSPHATASE"/>
    <property type="match status" value="1"/>
</dbReference>
<dbReference type="Pfam" id="PF01451">
    <property type="entry name" value="LMWPc"/>
    <property type="match status" value="1"/>
</dbReference>
<dbReference type="PRINTS" id="PR00719">
    <property type="entry name" value="LMWPTPASE"/>
</dbReference>
<dbReference type="PRINTS" id="PR00720">
    <property type="entry name" value="MAMMALPTPASE"/>
</dbReference>
<dbReference type="SMART" id="SM00226">
    <property type="entry name" value="LMWPc"/>
    <property type="match status" value="1"/>
</dbReference>
<dbReference type="SUPFAM" id="SSF52788">
    <property type="entry name" value="Phosphotyrosine protein phosphatases I"/>
    <property type="match status" value="1"/>
</dbReference>
<protein>
    <recommendedName>
        <fullName evidence="5">Low molecular weight phosphotyrosine protein phosphatase</fullName>
        <shortName>LMW-PTP</shortName>
        <shortName>LMW-PTPase</shortName>
        <ecNumber evidence="2">3.1.3.48</ecNumber>
    </recommendedName>
    <alternativeName>
        <fullName>Low molecular weight cytosolic acid phosphatase</fullName>
        <ecNumber evidence="2">3.1.3.2</ecNumber>
    </alternativeName>
</protein>
<accession>P41498</accession>
<accession>Q9R138</accession>
<feature type="initiator methionine" description="Removed" evidence="3">
    <location>
        <position position="1"/>
    </location>
</feature>
<feature type="chain" id="PRO_0000046561" description="Low molecular weight phosphotyrosine protein phosphatase">
    <location>
        <begin position="2"/>
        <end position="158"/>
    </location>
</feature>
<feature type="active site" description="Nucleophile" evidence="1">
    <location>
        <position position="13"/>
    </location>
</feature>
<feature type="active site" evidence="1">
    <location>
        <position position="19"/>
    </location>
</feature>
<feature type="active site" description="Proton donor" evidence="1">
    <location>
        <position position="130"/>
    </location>
</feature>
<feature type="modified residue" description="N-acetylalanine" evidence="3">
    <location>
        <position position="2"/>
    </location>
</feature>
<feature type="modified residue" description="Phosphotyrosine" evidence="2">
    <location>
        <position position="132"/>
    </location>
</feature>
<feature type="modified residue" description="Phosphotyrosine" evidence="2">
    <location>
        <position position="133"/>
    </location>
</feature>
<feature type="splice variant" id="VSP_004705" description="In isoform 2." evidence="4">
    <original>RIDSAATSTYEVGNPPDYRGQNCMKKHGIHMQHI</original>
    <variation>AIDSSAVSDWNVGRPPDPRAVNCLRNHGISTAHK</variation>
    <location>
        <begin position="41"/>
        <end position="74"/>
    </location>
</feature>
<feature type="sequence conflict" description="In Ref. 2; AA sequence." evidence="5" ref="2">
    <original>A</original>
    <variation>ACA</variation>
    <location>
        <position position="2"/>
    </location>
</feature>
<proteinExistence type="evidence at protein level"/>
<comment type="function">
    <text evidence="2">Acts on tyrosine phosphorylated proteins, low-MW aryl phosphates and natural and synthetic acyl phosphates with differences in substrate specificity between isoform 1 and isoform 2.</text>
</comment>
<comment type="catalytic activity">
    <reaction evidence="2">
        <text>O-phospho-L-tyrosyl-[protein] + H2O = L-tyrosyl-[protein] + phosphate</text>
        <dbReference type="Rhea" id="RHEA:10684"/>
        <dbReference type="Rhea" id="RHEA-COMP:10136"/>
        <dbReference type="Rhea" id="RHEA-COMP:20101"/>
        <dbReference type="ChEBI" id="CHEBI:15377"/>
        <dbReference type="ChEBI" id="CHEBI:43474"/>
        <dbReference type="ChEBI" id="CHEBI:46858"/>
        <dbReference type="ChEBI" id="CHEBI:61978"/>
        <dbReference type="EC" id="3.1.3.48"/>
    </reaction>
    <physiologicalReaction direction="left-to-right" evidence="2">
        <dbReference type="Rhea" id="RHEA:10685"/>
    </physiologicalReaction>
</comment>
<comment type="catalytic activity">
    <reaction evidence="2">
        <text>a phosphate monoester + H2O = an alcohol + phosphate</text>
        <dbReference type="Rhea" id="RHEA:15017"/>
        <dbReference type="ChEBI" id="CHEBI:15377"/>
        <dbReference type="ChEBI" id="CHEBI:30879"/>
        <dbReference type="ChEBI" id="CHEBI:43474"/>
        <dbReference type="ChEBI" id="CHEBI:67140"/>
        <dbReference type="EC" id="3.1.3.2"/>
    </reaction>
    <physiologicalReaction direction="left-to-right" evidence="2">
        <dbReference type="Rhea" id="RHEA:15018"/>
    </physiologicalReaction>
</comment>
<comment type="activity regulation">
    <text evidence="2">Inhibited by sulfhydryl reagents.</text>
</comment>
<comment type="subunit">
    <text evidence="2">Interacts with EPHA2; dephosphorylates EPHA2. Interacts with EPHB1.</text>
</comment>
<comment type="subunit">
    <molecule>Isoform 1</molecule>
    <text evidence="2">Interacts with the SH3 domain of SPTAN1. There is no interaction observed for isoform 2.</text>
</comment>
<comment type="subcellular location">
    <subcellularLocation>
        <location>Cytoplasm</location>
    </subcellularLocation>
</comment>
<comment type="alternative products">
    <event type="alternative splicing"/>
    <isoform>
        <id>P41498-1</id>
        <name>1</name>
        <name>ACP1</name>
        <name>A</name>
        <sequence type="displayed"/>
    </isoform>
    <isoform>
        <id>P41498-2</id>
        <name>2</name>
        <name>ACP2</name>
        <name>B</name>
        <sequence type="described" ref="VSP_004705"/>
    </isoform>
    <text>Additional isoforms seem to exist.</text>
</comment>
<comment type="PTM">
    <molecule>Isoform 2</molecule>
    <text evidence="2">Phosphorylated by LCK. Phosphorylation at Tyr-132 increases its phosphatase activity.</text>
</comment>
<comment type="similarity">
    <text evidence="5">Belongs to the low molecular weight phosphotyrosine protein phosphatase family.</text>
</comment>
<sequence length="158" mass="18152">MAEVGSKSVLFVCLGNICRSPIAEAVFRKLVTDENVSDNWRIDSAATSTYEVGNPPDYRGQNCMKKHGIHMQHIARQITREDFATFDYILCMDESNLRDLNRKSNQVKNCKAKIELLGSYDPQKQLIIEDPYYGNDSDFEVVYQQCLRCCKAFLEKTH</sequence>
<organism>
    <name type="scientific">Rattus norvegicus</name>
    <name type="common">Rat</name>
    <dbReference type="NCBI Taxonomy" id="10116"/>
    <lineage>
        <taxon>Eukaryota</taxon>
        <taxon>Metazoa</taxon>
        <taxon>Chordata</taxon>
        <taxon>Craniata</taxon>
        <taxon>Vertebrata</taxon>
        <taxon>Euteleostomi</taxon>
        <taxon>Mammalia</taxon>
        <taxon>Eutheria</taxon>
        <taxon>Euarchontoglires</taxon>
        <taxon>Glires</taxon>
        <taxon>Rodentia</taxon>
        <taxon>Myomorpha</taxon>
        <taxon>Muroidea</taxon>
        <taxon>Muridae</taxon>
        <taxon>Murinae</taxon>
        <taxon>Rattus</taxon>
    </lineage>
</organism>
<reference key="1">
    <citation type="journal article" date="2002" name="Mol. Cell. Biol.">
        <title>Tyrosine phosphorylation regulates alpha II spectrin cleavage by calpain.</title>
        <authorList>
            <person name="Nicolas G."/>
            <person name="Fournier C.M."/>
            <person name="Galand C."/>
            <person name="Malbert-Colas L."/>
            <person name="Bournier O."/>
            <person name="Kroviarski Y."/>
            <person name="Bourgeois M."/>
            <person name="Camonis J.H."/>
            <person name="Dhermy D."/>
            <person name="Grandchamp B."/>
            <person name="Lecomte M.-C."/>
        </authorList>
    </citation>
    <scope>NUCLEOTIDE SEQUENCE [MRNA] (ISOFORM 1)</scope>
    <scope>INTERACTION WITH SPTAN1</scope>
    <source>
        <strain>Sprague-Dawley</strain>
        <tissue>Kidney</tissue>
    </source>
</reference>
<reference key="2">
    <citation type="journal article" date="1992" name="J. Protein Chem.">
        <title>Rat liver low M(r) phosphotyrosine protein phosphatase isoenzymes: purification and amino acid sequences.</title>
        <authorList>
            <person name="Manao G."/>
            <person name="Pazzagli L."/>
            <person name="Cirri P."/>
            <person name="Caselli A."/>
            <person name="Camici G."/>
            <person name="Cappugi G."/>
            <person name="Saeed A."/>
            <person name="Ramponi G."/>
        </authorList>
    </citation>
    <scope>PROTEIN SEQUENCE (ISOFORMS 1 AND 2)</scope>
    <scope>CLEAVAGE OF INITIATOR METHIONINE</scope>
    <scope>ACETYLATION AT ALA-2</scope>
    <source>
        <tissue>Liver</tissue>
    </source>
</reference>
<reference key="3">
    <citation type="journal article" date="2004" name="Genome Res.">
        <title>The status, quality, and expansion of the NIH full-length cDNA project: the Mammalian Gene Collection (MGC).</title>
        <authorList>
            <consortium name="The MGC Project Team"/>
        </authorList>
    </citation>
    <scope>NUCLEOTIDE SEQUENCE [LARGE SCALE MRNA] (ISOFORM 1)</scope>
    <source>
        <tissue>Pituitary</tissue>
    </source>
</reference>
<reference key="4">
    <citation type="submission" date="2007-04" db="UniProtKB">
        <authorList>
            <person name="Lubec G."/>
            <person name="Afjehi-Sadat L."/>
            <person name="Diao W."/>
        </authorList>
    </citation>
    <scope>PROTEIN SEQUENCE OF 20-28; 42-59 AND 114-124</scope>
    <scope>IDENTIFICATION BY MASS SPECTROMETRY</scope>
    <source>
        <strain>Sprague-Dawley</strain>
        <tissue>Hippocampus</tissue>
        <tissue>Spinal cord</tissue>
    </source>
</reference>
<name>PPAC_RAT</name>